<evidence type="ECO:0000255" key="1">
    <source>
        <dbReference type="HAMAP-Rule" id="MF_00338"/>
    </source>
</evidence>
<reference key="1">
    <citation type="journal article" date="2003" name="Proc. Natl. Acad. Sci. U.S.A.">
        <title>Complete genome sequence of Lactobacillus plantarum WCFS1.</title>
        <authorList>
            <person name="Kleerebezem M."/>
            <person name="Boekhorst J."/>
            <person name="van Kranenburg R."/>
            <person name="Molenaar D."/>
            <person name="Kuipers O.P."/>
            <person name="Leer R."/>
            <person name="Tarchini R."/>
            <person name="Peters S.A."/>
            <person name="Sandbrink H.M."/>
            <person name="Fiers M.W.E.J."/>
            <person name="Stiekema W."/>
            <person name="Klein Lankhorst R.M."/>
            <person name="Bron P.A."/>
            <person name="Hoffer S.M."/>
            <person name="Nierop Groot M.N."/>
            <person name="Kerkhoven R."/>
            <person name="De Vries M."/>
            <person name="Ursing B."/>
            <person name="De Vos W.M."/>
            <person name="Siezen R.J."/>
        </authorList>
    </citation>
    <scope>NUCLEOTIDE SEQUENCE [LARGE SCALE GENOMIC DNA]</scope>
    <source>
        <strain>ATCC BAA-793 / NCIMB 8826 / WCFS1</strain>
    </source>
</reference>
<reference key="2">
    <citation type="journal article" date="2012" name="J. Bacteriol.">
        <title>Complete resequencing and reannotation of the Lactobacillus plantarum WCFS1 genome.</title>
        <authorList>
            <person name="Siezen R.J."/>
            <person name="Francke C."/>
            <person name="Renckens B."/>
            <person name="Boekhorst J."/>
            <person name="Wels M."/>
            <person name="Kleerebezem M."/>
            <person name="van Hijum S.A."/>
        </authorList>
    </citation>
    <scope>NUCLEOTIDE SEQUENCE [LARGE SCALE GENOMIC DNA]</scope>
    <scope>GENOME REANNOTATION</scope>
    <source>
        <strain>ATCC BAA-793 / NCIMB 8826 / WCFS1</strain>
    </source>
</reference>
<sequence>MTQLLVTTTENIPGHPYEVIGEVFGLTTQSKNLVRNIGAGLKGLVGGEIKDYTKMLEESRDVAVNRLRDNASAMGADAVVMMRFDTGSISQDMQSVAAYGTAVRFITEDLTTDNA</sequence>
<comment type="similarity">
    <text evidence="1">Belongs to the UPF0145 family.</text>
</comment>
<organism>
    <name type="scientific">Lactiplantibacillus plantarum (strain ATCC BAA-793 / NCIMB 8826 / WCFS1)</name>
    <name type="common">Lactobacillus plantarum</name>
    <dbReference type="NCBI Taxonomy" id="220668"/>
    <lineage>
        <taxon>Bacteria</taxon>
        <taxon>Bacillati</taxon>
        <taxon>Bacillota</taxon>
        <taxon>Bacilli</taxon>
        <taxon>Lactobacillales</taxon>
        <taxon>Lactobacillaceae</taxon>
        <taxon>Lactiplantibacillus</taxon>
    </lineage>
</organism>
<gene>
    <name type="ordered locus">lp_2083</name>
</gene>
<dbReference type="EMBL" id="AL935263">
    <property type="protein sequence ID" value="CCC79321.1"/>
    <property type="molecule type" value="Genomic_DNA"/>
</dbReference>
<dbReference type="RefSeq" id="WP_003640765.1">
    <property type="nucleotide sequence ID" value="NC_004567.2"/>
</dbReference>
<dbReference type="RefSeq" id="YP_004889835.1">
    <property type="nucleotide sequence ID" value="NC_004567.2"/>
</dbReference>
<dbReference type="SMR" id="Q88VH3"/>
<dbReference type="STRING" id="220668.lp_2083"/>
<dbReference type="EnsemblBacteria" id="CCC79321">
    <property type="protein sequence ID" value="CCC79321"/>
    <property type="gene ID" value="lp_2083"/>
</dbReference>
<dbReference type="KEGG" id="lpl:lp_2083"/>
<dbReference type="PATRIC" id="fig|220668.9.peg.1762"/>
<dbReference type="eggNOG" id="COG0393">
    <property type="taxonomic scope" value="Bacteria"/>
</dbReference>
<dbReference type="HOGENOM" id="CLU_117144_1_1_9"/>
<dbReference type="OrthoDB" id="9796448at2"/>
<dbReference type="PhylomeDB" id="Q88VH3"/>
<dbReference type="Proteomes" id="UP000000432">
    <property type="component" value="Chromosome"/>
</dbReference>
<dbReference type="Gene3D" id="3.30.110.70">
    <property type="entry name" value="Hypothetical protein apc22750. Chain B"/>
    <property type="match status" value="1"/>
</dbReference>
<dbReference type="HAMAP" id="MF_00338">
    <property type="entry name" value="UPF0145"/>
    <property type="match status" value="1"/>
</dbReference>
<dbReference type="InterPro" id="IPR035439">
    <property type="entry name" value="UPF0145_dom_sf"/>
</dbReference>
<dbReference type="InterPro" id="IPR002765">
    <property type="entry name" value="UPF0145_YbjQ-like"/>
</dbReference>
<dbReference type="PANTHER" id="PTHR34068:SF2">
    <property type="entry name" value="UPF0145 PROTEIN SCO3412"/>
    <property type="match status" value="1"/>
</dbReference>
<dbReference type="PANTHER" id="PTHR34068">
    <property type="entry name" value="UPF0145 PROTEIN YBJQ"/>
    <property type="match status" value="1"/>
</dbReference>
<dbReference type="Pfam" id="PF01906">
    <property type="entry name" value="YbjQ_1"/>
    <property type="match status" value="1"/>
</dbReference>
<dbReference type="SUPFAM" id="SSF117782">
    <property type="entry name" value="YbjQ-like"/>
    <property type="match status" value="1"/>
</dbReference>
<keyword id="KW-1185">Reference proteome</keyword>
<protein>
    <recommendedName>
        <fullName evidence="1">UPF0145 protein lp_2083</fullName>
    </recommendedName>
</protein>
<name>Y2083_LACPL</name>
<feature type="chain" id="PRO_0000138471" description="UPF0145 protein lp_2083">
    <location>
        <begin position="1"/>
        <end position="115"/>
    </location>
</feature>
<accession>Q88VH3</accession>
<accession>F9UQ32</accession>
<proteinExistence type="inferred from homology"/>